<reference key="1">
    <citation type="journal article" date="2011" name="Planta">
        <title>Heterologous expression of two FAD-dependent oxidases with (S)-tetrahydroprotoberberine oxidase activity from Argemone mexicana and Berberis wilsoniae in insect cells.</title>
        <authorList>
            <person name="Gesell A."/>
            <person name="Diaz Chavez M.L."/>
            <person name="Kramell R."/>
            <person name="Piotrowski M."/>
            <person name="Macheroux P."/>
            <person name="Kutchan T.M."/>
        </authorList>
    </citation>
    <scope>NUCLEOTIDE SEQUENCE [MRNA]</scope>
    <scope>FUNCTION</scope>
    <scope>CATALYTIC ACTIVITY</scope>
    <scope>COFACTOR</scope>
</reference>
<reference key="2">
    <citation type="journal article" date="1988" name="Eur. J. Biochem.">
        <title>Purification and properties of (S)-tetrahydroprotoberberine oxidase from suspension-cultured cells of Berberis wilsoniae.</title>
        <authorList>
            <person name="Amann M."/>
            <person name="Nagakura N."/>
            <person name="Zenk M.H."/>
        </authorList>
    </citation>
    <scope>FUNCTION</scope>
    <scope>CATALYTIC ACTIVITY</scope>
    <scope>COFACTOR</scope>
    <scope>BIOPHYSICOCHEMICAL PROPERTIES</scope>
</reference>
<keyword id="KW-1015">Disulfide bond</keyword>
<keyword id="KW-0274">FAD</keyword>
<keyword id="KW-0285">Flavoprotein</keyword>
<keyword id="KW-0325">Glycoprotein</keyword>
<keyword id="KW-0547">Nucleotide-binding</keyword>
<keyword id="KW-0560">Oxidoreductase</keyword>
<keyword id="KW-0732">Signal</keyword>
<keyword id="KW-0883">Thioether bond</keyword>
<accession>F1BVB6</accession>
<comment type="function">
    <text evidence="6 7">Catalyzes the oxidation of different tetrahydroprotoberberines, such as (S)-canadine, (S)-scoulerine and (S)-corypalmine (PubMed:3402447). Catalyzes the oxidation of (S)-coreximine and (S)-tetrahydropalmatine (PubMed:21327819, PubMed:3402447). Catalyzes the oxidation of different 1-benzylisoquinoline alkaloids, such as (S)-norreticuline, (S)-nororientaline, (S)-coclaurine and (S)-norisoorientaline (PubMed:3402447). Exhibits strict specificity for the (S)-enantiomer of tetrahydroprotoberbirines and 1-benzylisoquinoline alkaloids (PubMed:3402447).</text>
</comment>
<comment type="catalytic activity">
    <reaction evidence="6 7">
        <text>(S)-canadine + 2 O2 + H(+) = berberine + 2 H2O2</text>
        <dbReference type="Rhea" id="RHEA:13489"/>
        <dbReference type="ChEBI" id="CHEBI:15378"/>
        <dbReference type="ChEBI" id="CHEBI:15379"/>
        <dbReference type="ChEBI" id="CHEBI:16118"/>
        <dbReference type="ChEBI" id="CHEBI:16240"/>
        <dbReference type="ChEBI" id="CHEBI:16592"/>
        <dbReference type="EC" id="1.3.3.8"/>
    </reaction>
    <physiologicalReaction direction="left-to-right" evidence="6 7">
        <dbReference type="Rhea" id="RHEA:13490"/>
    </physiologicalReaction>
</comment>
<comment type="cofactor">
    <cofactor evidence="6 7">
        <name>FAD</name>
        <dbReference type="ChEBI" id="CHEBI:57692"/>
    </cofactor>
    <text evidence="1">Binds 1 FAD per subunit in a bicovalent manner.</text>
</comment>
<comment type="biophysicochemical properties">
    <kinetics>
        <KM evidence="7">13.3 uM for (S)-canadine</KM>
        <KM evidence="7">25 uM for (S)-scoulerine</KM>
        <KM evidence="7">4.3 uM for (S)-tetrahydropalmatine</KM>
        <KM evidence="7">0.7 uM for (S)-corypalmine</KM>
    </kinetics>
    <phDependence>
        <text evidence="7">Optimum pH is 8.9.</text>
    </phDependence>
</comment>
<comment type="PTM">
    <text evidence="1">The FAD cofactor is bound via a bicovalent 6-S-cysteinyl, 8alpha-N1-histidyl FAD linkage.</text>
</comment>
<comment type="similarity">
    <text evidence="10">Belongs to the oxygen-dependent FAD-linked oxidoreductase family.</text>
</comment>
<dbReference type="EC" id="1.3.3.8" evidence="6 7"/>
<dbReference type="EMBL" id="HQ116697">
    <property type="protein sequence ID" value="ADY15026.1"/>
    <property type="molecule type" value="mRNA"/>
</dbReference>
<dbReference type="SMR" id="F1BVB6"/>
<dbReference type="KEGG" id="ag:ADY15026"/>
<dbReference type="GO" id="GO:0071949">
    <property type="term" value="F:FAD binding"/>
    <property type="evidence" value="ECO:0000314"/>
    <property type="project" value="UniProtKB"/>
</dbReference>
<dbReference type="GO" id="GO:0050328">
    <property type="term" value="F:tetrahydroberberine oxidase activity"/>
    <property type="evidence" value="ECO:0000314"/>
    <property type="project" value="UniProtKB"/>
</dbReference>
<dbReference type="FunFam" id="3.30.43.10:FF:000004">
    <property type="entry name" value="Berberine bridge enzyme-like 15"/>
    <property type="match status" value="1"/>
</dbReference>
<dbReference type="Gene3D" id="3.30.465.10">
    <property type="match status" value="1"/>
</dbReference>
<dbReference type="Gene3D" id="3.40.462.20">
    <property type="match status" value="1"/>
</dbReference>
<dbReference type="Gene3D" id="3.30.43.10">
    <property type="entry name" value="Uridine Diphospho-n-acetylenolpyruvylglucosamine Reductase, domain 2"/>
    <property type="match status" value="1"/>
</dbReference>
<dbReference type="InterPro" id="IPR012951">
    <property type="entry name" value="BBE"/>
</dbReference>
<dbReference type="InterPro" id="IPR016166">
    <property type="entry name" value="FAD-bd_PCMH"/>
</dbReference>
<dbReference type="InterPro" id="IPR036318">
    <property type="entry name" value="FAD-bd_PCMH-like_sf"/>
</dbReference>
<dbReference type="InterPro" id="IPR016167">
    <property type="entry name" value="FAD-bd_PCMH_sub1"/>
</dbReference>
<dbReference type="InterPro" id="IPR016169">
    <property type="entry name" value="FAD-bd_PCMH_sub2"/>
</dbReference>
<dbReference type="InterPro" id="IPR006094">
    <property type="entry name" value="Oxid_FAD_bind_N"/>
</dbReference>
<dbReference type="PANTHER" id="PTHR32448">
    <property type="entry name" value="OS08G0158400 PROTEIN"/>
    <property type="match status" value="1"/>
</dbReference>
<dbReference type="Pfam" id="PF08031">
    <property type="entry name" value="BBE"/>
    <property type="match status" value="1"/>
</dbReference>
<dbReference type="Pfam" id="PF01565">
    <property type="entry name" value="FAD_binding_4"/>
    <property type="match status" value="1"/>
</dbReference>
<dbReference type="SUPFAM" id="SSF56176">
    <property type="entry name" value="FAD-binding/transporter-associated domain-like"/>
    <property type="match status" value="1"/>
</dbReference>
<dbReference type="PROSITE" id="PS51387">
    <property type="entry name" value="FAD_PCMH"/>
    <property type="match status" value="1"/>
</dbReference>
<proteinExistence type="evidence at protein level"/>
<evidence type="ECO:0000250" key="1">
    <source>
        <dbReference type="UniProtKB" id="O64743"/>
    </source>
</evidence>
<evidence type="ECO:0000250" key="2">
    <source>
        <dbReference type="UniProtKB" id="P30986"/>
    </source>
</evidence>
<evidence type="ECO:0000255" key="3"/>
<evidence type="ECO:0000255" key="4">
    <source>
        <dbReference type="PROSITE-ProRule" id="PRU00498"/>
    </source>
</evidence>
<evidence type="ECO:0000255" key="5">
    <source>
        <dbReference type="PROSITE-ProRule" id="PRU00718"/>
    </source>
</evidence>
<evidence type="ECO:0000269" key="6">
    <source>
    </source>
</evidence>
<evidence type="ECO:0000269" key="7">
    <source>
    </source>
</evidence>
<evidence type="ECO:0000303" key="8">
    <source>
    </source>
</evidence>
<evidence type="ECO:0000303" key="9">
    <source>
    </source>
</evidence>
<evidence type="ECO:0000305" key="10"/>
<feature type="signal peptide" evidence="3">
    <location>
        <begin position="1"/>
        <end position="24"/>
    </location>
</feature>
<feature type="chain" id="PRO_5003263162" description="Tetrahydroberberine oxidase" evidence="3">
    <location>
        <begin position="25"/>
        <end position="530"/>
    </location>
</feature>
<feature type="domain" description="FAD-binding PCMH-type" evidence="5">
    <location>
        <begin position="72"/>
        <end position="246"/>
    </location>
</feature>
<feature type="glycosylation site" description="N-linked (GlcNAc...) asparagine" evidence="4">
    <location>
        <position position="51"/>
    </location>
</feature>
<feature type="glycosylation site" description="N-linked (GlcNAc...) asparagine" evidence="4">
    <location>
        <position position="483"/>
    </location>
</feature>
<feature type="disulfide bond" evidence="2">
    <location>
        <begin position="36"/>
        <end position="94"/>
    </location>
</feature>
<feature type="cross-link" description="6-(S-cysteinyl)-8alpha-(pros-histidyl)-FAD (His-Cys)" evidence="1">
    <location>
        <begin position="109"/>
        <end position="171"/>
    </location>
</feature>
<sequence length="530" mass="58990">MSKMASSIFATFSLLSSLLPTSLASSDANYEDFLQCLDLYSQNSIPVYTRNTSSYTSILESTIKNLVFLSPTTPKPNFIVTPMQESHVQTSVICCRMHGLQMRIRSGGHDFEGLSYVSNVPFVVLDLIHLKTINVDIEENSAWVQTGATIGELYYRIAEKVGVHAFPAGLCPTVGVGGHISGAGYGVLMRKYGVSADHVIDARIVNVDGEILDRESMGEDLFWAIRGGGGASFGVILAWKIRLVPVPPTVTIFIVPKTLEEGATALLHKWQFIGDNVHEDLFIGLSMRSVIISPKGDKTILVSFIGLFLGGSDKLVQHMEQSFPELGVKPHDCIEMSWIKSTVVFGVFSNDASLSVLLDRKNPFPPKSYHKVKSDYVTEPLPISVLEGICHRFLKNGVNKAEIIMSPYGGRMNEISESEIAFPHRKGNLYKINYIAEWEEAGSMENHLSWIRELYRYMTPYVSKSPRSSYLNFKDIDLGQTKNGTATYSQAKAWGSKYFKNNFKRLMQVKTKVDPNNFFCNEQGIPPFSS</sequence>
<organism>
    <name type="scientific">Berberis wilsoniae</name>
    <name type="common">Mrs Wilson's barberry</name>
    <dbReference type="NCBI Taxonomy" id="258211"/>
    <lineage>
        <taxon>Eukaryota</taxon>
        <taxon>Viridiplantae</taxon>
        <taxon>Streptophyta</taxon>
        <taxon>Embryophyta</taxon>
        <taxon>Tracheophyta</taxon>
        <taxon>Spermatophyta</taxon>
        <taxon>Magnoliopsida</taxon>
        <taxon>Ranunculales</taxon>
        <taxon>Berberidaceae</taxon>
        <taxon>Berberidoideae</taxon>
        <taxon>Berberideae</taxon>
        <taxon>Berberis</taxon>
    </lineage>
</organism>
<protein>
    <recommendedName>
        <fullName evidence="9">Tetrahydroberberine oxidase</fullName>
        <shortName evidence="10">THB oxidase</shortName>
        <ecNumber evidence="6 7">1.3.3.8</ecNumber>
    </recommendedName>
    <alternativeName>
        <fullName evidence="8">(S)-tetrahydroprotoberberine oxidase</fullName>
        <shortName evidence="8">BwSTOX</shortName>
    </alternativeName>
</protein>
<name>STOX_BERWI</name>